<gene>
    <name evidence="1" type="primary">nrdR</name>
    <name type="ordered locus">FMG_0620</name>
</gene>
<protein>
    <recommendedName>
        <fullName evidence="1">Transcriptional repressor NrdR</fullName>
    </recommendedName>
</protein>
<comment type="function">
    <text evidence="1">Negatively regulates transcription of bacterial ribonucleotide reductase nrd genes and operons by binding to NrdR-boxes.</text>
</comment>
<comment type="cofactor">
    <cofactor evidence="1">
        <name>Zn(2+)</name>
        <dbReference type="ChEBI" id="CHEBI:29105"/>
    </cofactor>
    <text evidence="1">Binds 1 zinc ion.</text>
</comment>
<comment type="similarity">
    <text evidence="1">Belongs to the NrdR family.</text>
</comment>
<accession>B0S0Z8</accession>
<name>NRDR_FINM2</name>
<sequence length="150" mass="17743">MKCPFCNASDTKVVDTRASEDDKIVRRRRECISCHKRFTTYERYDFNNLTVVKKDKNREAFDRDKVYRGMKKSCEKRPVPDSVLLEATKEIEVELTHSNKREVDSSEIGELIMKKLKKIDKVAYIRFASVYREFTDVKSFNEEISKLDNE</sequence>
<feature type="chain" id="PRO_1000124509" description="Transcriptional repressor NrdR">
    <location>
        <begin position="1"/>
        <end position="150"/>
    </location>
</feature>
<feature type="domain" description="ATP-cone" evidence="1">
    <location>
        <begin position="49"/>
        <end position="139"/>
    </location>
</feature>
<feature type="zinc finger region" evidence="1">
    <location>
        <begin position="3"/>
        <end position="34"/>
    </location>
</feature>
<keyword id="KW-0067">ATP-binding</keyword>
<keyword id="KW-0238">DNA-binding</keyword>
<keyword id="KW-0479">Metal-binding</keyword>
<keyword id="KW-0547">Nucleotide-binding</keyword>
<keyword id="KW-1185">Reference proteome</keyword>
<keyword id="KW-0678">Repressor</keyword>
<keyword id="KW-0804">Transcription</keyword>
<keyword id="KW-0805">Transcription regulation</keyword>
<keyword id="KW-0862">Zinc</keyword>
<keyword id="KW-0863">Zinc-finger</keyword>
<dbReference type="EMBL" id="AP008971">
    <property type="protein sequence ID" value="BAG08038.1"/>
    <property type="molecule type" value="Genomic_DNA"/>
</dbReference>
<dbReference type="RefSeq" id="WP_002836229.1">
    <property type="nucleotide sequence ID" value="NC_010376.1"/>
</dbReference>
<dbReference type="SMR" id="B0S0Z8"/>
<dbReference type="STRING" id="334413.FMG_0620"/>
<dbReference type="GeneID" id="60840009"/>
<dbReference type="KEGG" id="fma:FMG_0620"/>
<dbReference type="eggNOG" id="COG1327">
    <property type="taxonomic scope" value="Bacteria"/>
</dbReference>
<dbReference type="HOGENOM" id="CLU_108412_0_0_9"/>
<dbReference type="Proteomes" id="UP000001319">
    <property type="component" value="Chromosome"/>
</dbReference>
<dbReference type="GO" id="GO:0005524">
    <property type="term" value="F:ATP binding"/>
    <property type="evidence" value="ECO:0007669"/>
    <property type="project" value="UniProtKB-KW"/>
</dbReference>
<dbReference type="GO" id="GO:0003677">
    <property type="term" value="F:DNA binding"/>
    <property type="evidence" value="ECO:0007669"/>
    <property type="project" value="UniProtKB-KW"/>
</dbReference>
<dbReference type="GO" id="GO:0008270">
    <property type="term" value="F:zinc ion binding"/>
    <property type="evidence" value="ECO:0007669"/>
    <property type="project" value="UniProtKB-UniRule"/>
</dbReference>
<dbReference type="GO" id="GO:0045892">
    <property type="term" value="P:negative regulation of DNA-templated transcription"/>
    <property type="evidence" value="ECO:0007669"/>
    <property type="project" value="UniProtKB-UniRule"/>
</dbReference>
<dbReference type="HAMAP" id="MF_00440">
    <property type="entry name" value="NrdR"/>
    <property type="match status" value="1"/>
</dbReference>
<dbReference type="InterPro" id="IPR005144">
    <property type="entry name" value="ATP-cone_dom"/>
</dbReference>
<dbReference type="InterPro" id="IPR055173">
    <property type="entry name" value="NrdR-like_N"/>
</dbReference>
<dbReference type="InterPro" id="IPR003796">
    <property type="entry name" value="RNR_NrdR-like"/>
</dbReference>
<dbReference type="NCBIfam" id="TIGR00244">
    <property type="entry name" value="transcriptional regulator NrdR"/>
    <property type="match status" value="1"/>
</dbReference>
<dbReference type="PANTHER" id="PTHR30455">
    <property type="entry name" value="TRANSCRIPTIONAL REPRESSOR NRDR"/>
    <property type="match status" value="1"/>
</dbReference>
<dbReference type="PANTHER" id="PTHR30455:SF2">
    <property type="entry name" value="TRANSCRIPTIONAL REPRESSOR NRDR"/>
    <property type="match status" value="1"/>
</dbReference>
<dbReference type="Pfam" id="PF03477">
    <property type="entry name" value="ATP-cone"/>
    <property type="match status" value="1"/>
</dbReference>
<dbReference type="Pfam" id="PF22811">
    <property type="entry name" value="Zn_ribbon_NrdR"/>
    <property type="match status" value="1"/>
</dbReference>
<dbReference type="PROSITE" id="PS51161">
    <property type="entry name" value="ATP_CONE"/>
    <property type="match status" value="1"/>
</dbReference>
<organism>
    <name type="scientific">Finegoldia magna (strain ATCC 29328 / DSM 20472 / WAL 2508)</name>
    <name type="common">Peptostreptococcus magnus</name>
    <dbReference type="NCBI Taxonomy" id="334413"/>
    <lineage>
        <taxon>Bacteria</taxon>
        <taxon>Bacillati</taxon>
        <taxon>Bacillota</taxon>
        <taxon>Tissierellia</taxon>
        <taxon>Tissierellales</taxon>
        <taxon>Peptoniphilaceae</taxon>
        <taxon>Finegoldia</taxon>
    </lineage>
</organism>
<evidence type="ECO:0000255" key="1">
    <source>
        <dbReference type="HAMAP-Rule" id="MF_00440"/>
    </source>
</evidence>
<proteinExistence type="inferred from homology"/>
<reference key="1">
    <citation type="journal article" date="2008" name="DNA Res.">
        <title>Complete genome sequence of Finegoldia magna, an anaerobic opportunistic pathogen.</title>
        <authorList>
            <person name="Goto T."/>
            <person name="Yamashita A."/>
            <person name="Hirakawa H."/>
            <person name="Matsutani M."/>
            <person name="Todo K."/>
            <person name="Ohshima K."/>
            <person name="Toh H."/>
            <person name="Miyamoto K."/>
            <person name="Kuhara S."/>
            <person name="Hattori M."/>
            <person name="Shimizu T."/>
            <person name="Akimoto S."/>
        </authorList>
    </citation>
    <scope>NUCLEOTIDE SEQUENCE [LARGE SCALE GENOMIC DNA]</scope>
    <source>
        <strain>ATCC 29328 / DSM 20472 / WAL 2508</strain>
    </source>
</reference>